<accession>Q0BDS3</accession>
<gene>
    <name evidence="1" type="primary">eno</name>
    <name type="ordered locus">Bamb_2144</name>
</gene>
<dbReference type="EC" id="4.2.1.11" evidence="1"/>
<dbReference type="EMBL" id="CP000440">
    <property type="protein sequence ID" value="ABI87700.1"/>
    <property type="molecule type" value="Genomic_DNA"/>
</dbReference>
<dbReference type="RefSeq" id="WP_006751590.1">
    <property type="nucleotide sequence ID" value="NZ_CP009798.1"/>
</dbReference>
<dbReference type="SMR" id="Q0BDS3"/>
<dbReference type="GeneID" id="93085652"/>
<dbReference type="KEGG" id="bam:Bamb_2144"/>
<dbReference type="PATRIC" id="fig|339670.21.peg.2791"/>
<dbReference type="eggNOG" id="COG0148">
    <property type="taxonomic scope" value="Bacteria"/>
</dbReference>
<dbReference type="UniPathway" id="UPA00109">
    <property type="reaction ID" value="UER00187"/>
</dbReference>
<dbReference type="Proteomes" id="UP000000662">
    <property type="component" value="Chromosome 1"/>
</dbReference>
<dbReference type="GO" id="GO:0009986">
    <property type="term" value="C:cell surface"/>
    <property type="evidence" value="ECO:0007669"/>
    <property type="project" value="UniProtKB-SubCell"/>
</dbReference>
<dbReference type="GO" id="GO:0005576">
    <property type="term" value="C:extracellular region"/>
    <property type="evidence" value="ECO:0007669"/>
    <property type="project" value="UniProtKB-SubCell"/>
</dbReference>
<dbReference type="GO" id="GO:0000015">
    <property type="term" value="C:phosphopyruvate hydratase complex"/>
    <property type="evidence" value="ECO:0007669"/>
    <property type="project" value="InterPro"/>
</dbReference>
<dbReference type="GO" id="GO:0000287">
    <property type="term" value="F:magnesium ion binding"/>
    <property type="evidence" value="ECO:0007669"/>
    <property type="project" value="UniProtKB-UniRule"/>
</dbReference>
<dbReference type="GO" id="GO:0004634">
    <property type="term" value="F:phosphopyruvate hydratase activity"/>
    <property type="evidence" value="ECO:0007669"/>
    <property type="project" value="UniProtKB-UniRule"/>
</dbReference>
<dbReference type="GO" id="GO:0006096">
    <property type="term" value="P:glycolytic process"/>
    <property type="evidence" value="ECO:0007669"/>
    <property type="project" value="UniProtKB-UniRule"/>
</dbReference>
<dbReference type="CDD" id="cd03313">
    <property type="entry name" value="enolase"/>
    <property type="match status" value="1"/>
</dbReference>
<dbReference type="FunFam" id="3.20.20.120:FF:000001">
    <property type="entry name" value="Enolase"/>
    <property type="match status" value="1"/>
</dbReference>
<dbReference type="FunFam" id="3.30.390.10:FF:000001">
    <property type="entry name" value="Enolase"/>
    <property type="match status" value="1"/>
</dbReference>
<dbReference type="Gene3D" id="3.20.20.120">
    <property type="entry name" value="Enolase-like C-terminal domain"/>
    <property type="match status" value="1"/>
</dbReference>
<dbReference type="Gene3D" id="3.30.390.10">
    <property type="entry name" value="Enolase-like, N-terminal domain"/>
    <property type="match status" value="1"/>
</dbReference>
<dbReference type="HAMAP" id="MF_00318">
    <property type="entry name" value="Enolase"/>
    <property type="match status" value="1"/>
</dbReference>
<dbReference type="InterPro" id="IPR000941">
    <property type="entry name" value="Enolase"/>
</dbReference>
<dbReference type="InterPro" id="IPR036849">
    <property type="entry name" value="Enolase-like_C_sf"/>
</dbReference>
<dbReference type="InterPro" id="IPR029017">
    <property type="entry name" value="Enolase-like_N"/>
</dbReference>
<dbReference type="InterPro" id="IPR020810">
    <property type="entry name" value="Enolase_C"/>
</dbReference>
<dbReference type="InterPro" id="IPR020809">
    <property type="entry name" value="Enolase_CS"/>
</dbReference>
<dbReference type="InterPro" id="IPR020811">
    <property type="entry name" value="Enolase_N"/>
</dbReference>
<dbReference type="NCBIfam" id="TIGR01060">
    <property type="entry name" value="eno"/>
    <property type="match status" value="1"/>
</dbReference>
<dbReference type="PANTHER" id="PTHR11902">
    <property type="entry name" value="ENOLASE"/>
    <property type="match status" value="1"/>
</dbReference>
<dbReference type="PANTHER" id="PTHR11902:SF1">
    <property type="entry name" value="ENOLASE"/>
    <property type="match status" value="1"/>
</dbReference>
<dbReference type="Pfam" id="PF00113">
    <property type="entry name" value="Enolase_C"/>
    <property type="match status" value="1"/>
</dbReference>
<dbReference type="Pfam" id="PF03952">
    <property type="entry name" value="Enolase_N"/>
    <property type="match status" value="1"/>
</dbReference>
<dbReference type="PIRSF" id="PIRSF001400">
    <property type="entry name" value="Enolase"/>
    <property type="match status" value="1"/>
</dbReference>
<dbReference type="PRINTS" id="PR00148">
    <property type="entry name" value="ENOLASE"/>
</dbReference>
<dbReference type="SFLD" id="SFLDS00001">
    <property type="entry name" value="Enolase"/>
    <property type="match status" value="1"/>
</dbReference>
<dbReference type="SFLD" id="SFLDF00002">
    <property type="entry name" value="enolase"/>
    <property type="match status" value="1"/>
</dbReference>
<dbReference type="SMART" id="SM01192">
    <property type="entry name" value="Enolase_C"/>
    <property type="match status" value="1"/>
</dbReference>
<dbReference type="SMART" id="SM01193">
    <property type="entry name" value="Enolase_N"/>
    <property type="match status" value="1"/>
</dbReference>
<dbReference type="SUPFAM" id="SSF51604">
    <property type="entry name" value="Enolase C-terminal domain-like"/>
    <property type="match status" value="1"/>
</dbReference>
<dbReference type="SUPFAM" id="SSF54826">
    <property type="entry name" value="Enolase N-terminal domain-like"/>
    <property type="match status" value="1"/>
</dbReference>
<dbReference type="PROSITE" id="PS00164">
    <property type="entry name" value="ENOLASE"/>
    <property type="match status" value="1"/>
</dbReference>
<organism>
    <name type="scientific">Burkholderia ambifaria (strain ATCC BAA-244 / DSM 16087 / CCUG 44356 / LMG 19182 / AMMD)</name>
    <name type="common">Burkholderia cepacia (strain AMMD)</name>
    <dbReference type="NCBI Taxonomy" id="339670"/>
    <lineage>
        <taxon>Bacteria</taxon>
        <taxon>Pseudomonadati</taxon>
        <taxon>Pseudomonadota</taxon>
        <taxon>Betaproteobacteria</taxon>
        <taxon>Burkholderiales</taxon>
        <taxon>Burkholderiaceae</taxon>
        <taxon>Burkholderia</taxon>
        <taxon>Burkholderia cepacia complex</taxon>
    </lineage>
</organism>
<protein>
    <recommendedName>
        <fullName evidence="1">Enolase</fullName>
        <ecNumber evidence="1">4.2.1.11</ecNumber>
    </recommendedName>
    <alternativeName>
        <fullName evidence="1">2-phospho-D-glycerate hydro-lyase</fullName>
    </alternativeName>
    <alternativeName>
        <fullName evidence="1">2-phosphoglycerate dehydratase</fullName>
    </alternativeName>
</protein>
<reference key="1">
    <citation type="submission" date="2006-08" db="EMBL/GenBank/DDBJ databases">
        <title>Complete sequence of chromosome 1 of Burkholderia cepacia AMMD.</title>
        <authorList>
            <person name="Copeland A."/>
            <person name="Lucas S."/>
            <person name="Lapidus A."/>
            <person name="Barry K."/>
            <person name="Detter J.C."/>
            <person name="Glavina del Rio T."/>
            <person name="Hammon N."/>
            <person name="Israni S."/>
            <person name="Pitluck S."/>
            <person name="Bruce D."/>
            <person name="Chain P."/>
            <person name="Malfatti S."/>
            <person name="Shin M."/>
            <person name="Vergez L."/>
            <person name="Schmutz J."/>
            <person name="Larimer F."/>
            <person name="Land M."/>
            <person name="Hauser L."/>
            <person name="Kyrpides N."/>
            <person name="Kim E."/>
            <person name="Parke J."/>
            <person name="Coenye T."/>
            <person name="Konstantinidis K."/>
            <person name="Ramette A."/>
            <person name="Tiedje J."/>
            <person name="Richardson P."/>
        </authorList>
    </citation>
    <scope>NUCLEOTIDE SEQUENCE [LARGE SCALE GENOMIC DNA]</scope>
    <source>
        <strain>ATCC BAA-244 / DSM 16087 / CCUG 44356 / LMG 19182 / AMMD</strain>
    </source>
</reference>
<keyword id="KW-0963">Cytoplasm</keyword>
<keyword id="KW-0324">Glycolysis</keyword>
<keyword id="KW-0456">Lyase</keyword>
<keyword id="KW-0460">Magnesium</keyword>
<keyword id="KW-0479">Metal-binding</keyword>
<keyword id="KW-0964">Secreted</keyword>
<evidence type="ECO:0000255" key="1">
    <source>
        <dbReference type="HAMAP-Rule" id="MF_00318"/>
    </source>
</evidence>
<sequence>MSAIVDIIGREILDSRGNPTVECDVLLESGTMGRAAVPSGASTGSREAIELRDGEAGRYNGKGVLKAVEHINTEISEAIMGLDASEQAFLDKTLLELDGTDNKSRLGANAMLAVSMAVAKAAAEEAGLPLYRYFGGSGAMQLPVPMMNIVNGGAHANNSLDIQEFMIVPVSQPTFREALRCGAEVFHALKKILSDRGMSTAVGDEGGFAPNFGSNDECLSTILQAIEKAGYRAGEDVLLALDCAASEFYHDGKYQLAGEGLQLSSAEFTDYLATLADKFPIVSIEDGMHESDWEGWKLLTERLGKKVQLVGDDLFVTNTRILKEGIEKGIANSILIKINQIGTLTETFAAIEMAKRAGYTAVISHRSGETEDSTIADIAVGLNAGQIKTGSLSRSDRISKYNQLLRIEEDLGDIASYPGKSAFYNLR</sequence>
<feature type="chain" id="PRO_0000280839" description="Enolase">
    <location>
        <begin position="1"/>
        <end position="427"/>
    </location>
</feature>
<feature type="active site" description="Proton donor" evidence="1">
    <location>
        <position position="205"/>
    </location>
</feature>
<feature type="active site" description="Proton acceptor" evidence="1">
    <location>
        <position position="337"/>
    </location>
</feature>
<feature type="binding site" evidence="1">
    <location>
        <position position="163"/>
    </location>
    <ligand>
        <name>(2R)-2-phosphoglycerate</name>
        <dbReference type="ChEBI" id="CHEBI:58289"/>
    </ligand>
</feature>
<feature type="binding site" evidence="1">
    <location>
        <position position="242"/>
    </location>
    <ligand>
        <name>Mg(2+)</name>
        <dbReference type="ChEBI" id="CHEBI:18420"/>
    </ligand>
</feature>
<feature type="binding site" evidence="1">
    <location>
        <position position="285"/>
    </location>
    <ligand>
        <name>Mg(2+)</name>
        <dbReference type="ChEBI" id="CHEBI:18420"/>
    </ligand>
</feature>
<feature type="binding site" evidence="1">
    <location>
        <position position="312"/>
    </location>
    <ligand>
        <name>Mg(2+)</name>
        <dbReference type="ChEBI" id="CHEBI:18420"/>
    </ligand>
</feature>
<feature type="binding site" evidence="1">
    <location>
        <position position="337"/>
    </location>
    <ligand>
        <name>(2R)-2-phosphoglycerate</name>
        <dbReference type="ChEBI" id="CHEBI:58289"/>
    </ligand>
</feature>
<feature type="binding site" evidence="1">
    <location>
        <position position="366"/>
    </location>
    <ligand>
        <name>(2R)-2-phosphoglycerate</name>
        <dbReference type="ChEBI" id="CHEBI:58289"/>
    </ligand>
</feature>
<feature type="binding site" evidence="1">
    <location>
        <position position="367"/>
    </location>
    <ligand>
        <name>(2R)-2-phosphoglycerate</name>
        <dbReference type="ChEBI" id="CHEBI:58289"/>
    </ligand>
</feature>
<feature type="binding site" evidence="1">
    <location>
        <position position="388"/>
    </location>
    <ligand>
        <name>(2R)-2-phosphoglycerate</name>
        <dbReference type="ChEBI" id="CHEBI:58289"/>
    </ligand>
</feature>
<comment type="function">
    <text evidence="1">Catalyzes the reversible conversion of 2-phosphoglycerate (2-PG) into phosphoenolpyruvate (PEP). It is essential for the degradation of carbohydrates via glycolysis.</text>
</comment>
<comment type="catalytic activity">
    <reaction evidence="1">
        <text>(2R)-2-phosphoglycerate = phosphoenolpyruvate + H2O</text>
        <dbReference type="Rhea" id="RHEA:10164"/>
        <dbReference type="ChEBI" id="CHEBI:15377"/>
        <dbReference type="ChEBI" id="CHEBI:58289"/>
        <dbReference type="ChEBI" id="CHEBI:58702"/>
        <dbReference type="EC" id="4.2.1.11"/>
    </reaction>
</comment>
<comment type="cofactor">
    <cofactor evidence="1">
        <name>Mg(2+)</name>
        <dbReference type="ChEBI" id="CHEBI:18420"/>
    </cofactor>
    <text evidence="1">Binds a second Mg(2+) ion via substrate during catalysis.</text>
</comment>
<comment type="pathway">
    <text evidence="1">Carbohydrate degradation; glycolysis; pyruvate from D-glyceraldehyde 3-phosphate: step 4/5.</text>
</comment>
<comment type="subcellular location">
    <subcellularLocation>
        <location evidence="1">Cytoplasm</location>
    </subcellularLocation>
    <subcellularLocation>
        <location evidence="1">Secreted</location>
    </subcellularLocation>
    <subcellularLocation>
        <location evidence="1">Cell surface</location>
    </subcellularLocation>
    <text evidence="1">Fractions of enolase are present in both the cytoplasm and on the cell surface.</text>
</comment>
<comment type="similarity">
    <text evidence="1">Belongs to the enolase family.</text>
</comment>
<name>ENO_BURCM</name>
<proteinExistence type="inferred from homology"/>